<gene>
    <name type="primary">ybeF</name>
    <name type="ordered locus">BSU02150</name>
</gene>
<comment type="subcellular location">
    <subcellularLocation>
        <location evidence="2">Cell membrane</location>
        <topology evidence="2">Multi-pass membrane protein</topology>
    </subcellularLocation>
</comment>
<accession>O31442</accession>
<organism>
    <name type="scientific">Bacillus subtilis (strain 168)</name>
    <dbReference type="NCBI Taxonomy" id="224308"/>
    <lineage>
        <taxon>Bacteria</taxon>
        <taxon>Bacillati</taxon>
        <taxon>Bacillota</taxon>
        <taxon>Bacilli</taxon>
        <taxon>Bacillales</taxon>
        <taxon>Bacillaceae</taxon>
        <taxon>Bacillus</taxon>
    </lineage>
</organism>
<keyword id="KW-1003">Cell membrane</keyword>
<keyword id="KW-0472">Membrane</keyword>
<keyword id="KW-1185">Reference proteome</keyword>
<keyword id="KW-0812">Transmembrane</keyword>
<keyword id="KW-1133">Transmembrane helix</keyword>
<sequence length="82" mass="9159">MDELDIAFFILPLGIMLLSIVGTCICKNPYLMPMLSLVISLVLTFTIFNQSFLGWAVVYSLVSLALSYITLIVVRKRKESGN</sequence>
<protein>
    <recommendedName>
        <fullName>Uncharacterized protein YbeF</fullName>
    </recommendedName>
</protein>
<reference key="1">
    <citation type="submission" date="1997-07" db="EMBL/GenBank/DDBJ databases">
        <title>Sequence analysis of the 70kb region between 17 and 23 degree of the Bacillus subtilis chromosome.</title>
        <authorList>
            <person name="Haga K."/>
            <person name="Liu H."/>
            <person name="Yasumoto K."/>
            <person name="Takahashi H."/>
            <person name="Yoshikawa H."/>
        </authorList>
    </citation>
    <scope>NUCLEOTIDE SEQUENCE [GENOMIC DNA]</scope>
    <source>
        <strain>168</strain>
    </source>
</reference>
<reference key="2">
    <citation type="journal article" date="1997" name="Nature">
        <title>The complete genome sequence of the Gram-positive bacterium Bacillus subtilis.</title>
        <authorList>
            <person name="Kunst F."/>
            <person name="Ogasawara N."/>
            <person name="Moszer I."/>
            <person name="Albertini A.M."/>
            <person name="Alloni G."/>
            <person name="Azevedo V."/>
            <person name="Bertero M.G."/>
            <person name="Bessieres P."/>
            <person name="Bolotin A."/>
            <person name="Borchert S."/>
            <person name="Borriss R."/>
            <person name="Boursier L."/>
            <person name="Brans A."/>
            <person name="Braun M."/>
            <person name="Brignell S.C."/>
            <person name="Bron S."/>
            <person name="Brouillet S."/>
            <person name="Bruschi C.V."/>
            <person name="Caldwell B."/>
            <person name="Capuano V."/>
            <person name="Carter N.M."/>
            <person name="Choi S.-K."/>
            <person name="Codani J.-J."/>
            <person name="Connerton I.F."/>
            <person name="Cummings N.J."/>
            <person name="Daniel R.A."/>
            <person name="Denizot F."/>
            <person name="Devine K.M."/>
            <person name="Duesterhoeft A."/>
            <person name="Ehrlich S.D."/>
            <person name="Emmerson P.T."/>
            <person name="Entian K.-D."/>
            <person name="Errington J."/>
            <person name="Fabret C."/>
            <person name="Ferrari E."/>
            <person name="Foulger D."/>
            <person name="Fritz C."/>
            <person name="Fujita M."/>
            <person name="Fujita Y."/>
            <person name="Fuma S."/>
            <person name="Galizzi A."/>
            <person name="Galleron N."/>
            <person name="Ghim S.-Y."/>
            <person name="Glaser P."/>
            <person name="Goffeau A."/>
            <person name="Golightly E.J."/>
            <person name="Grandi G."/>
            <person name="Guiseppi G."/>
            <person name="Guy B.J."/>
            <person name="Haga K."/>
            <person name="Haiech J."/>
            <person name="Harwood C.R."/>
            <person name="Henaut A."/>
            <person name="Hilbert H."/>
            <person name="Holsappel S."/>
            <person name="Hosono S."/>
            <person name="Hullo M.-F."/>
            <person name="Itaya M."/>
            <person name="Jones L.-M."/>
            <person name="Joris B."/>
            <person name="Karamata D."/>
            <person name="Kasahara Y."/>
            <person name="Klaerr-Blanchard M."/>
            <person name="Klein C."/>
            <person name="Kobayashi Y."/>
            <person name="Koetter P."/>
            <person name="Koningstein G."/>
            <person name="Krogh S."/>
            <person name="Kumano M."/>
            <person name="Kurita K."/>
            <person name="Lapidus A."/>
            <person name="Lardinois S."/>
            <person name="Lauber J."/>
            <person name="Lazarevic V."/>
            <person name="Lee S.-M."/>
            <person name="Levine A."/>
            <person name="Liu H."/>
            <person name="Masuda S."/>
            <person name="Mauel C."/>
            <person name="Medigue C."/>
            <person name="Medina N."/>
            <person name="Mellado R.P."/>
            <person name="Mizuno M."/>
            <person name="Moestl D."/>
            <person name="Nakai S."/>
            <person name="Noback M."/>
            <person name="Noone D."/>
            <person name="O'Reilly M."/>
            <person name="Ogawa K."/>
            <person name="Ogiwara A."/>
            <person name="Oudega B."/>
            <person name="Park S.-H."/>
            <person name="Parro V."/>
            <person name="Pohl T.M."/>
            <person name="Portetelle D."/>
            <person name="Porwollik S."/>
            <person name="Prescott A.M."/>
            <person name="Presecan E."/>
            <person name="Pujic P."/>
            <person name="Purnelle B."/>
            <person name="Rapoport G."/>
            <person name="Rey M."/>
            <person name="Reynolds S."/>
            <person name="Rieger M."/>
            <person name="Rivolta C."/>
            <person name="Rocha E."/>
            <person name="Roche B."/>
            <person name="Rose M."/>
            <person name="Sadaie Y."/>
            <person name="Sato T."/>
            <person name="Scanlan E."/>
            <person name="Schleich S."/>
            <person name="Schroeter R."/>
            <person name="Scoffone F."/>
            <person name="Sekiguchi J."/>
            <person name="Sekowska A."/>
            <person name="Seror S.J."/>
            <person name="Serror P."/>
            <person name="Shin B.-S."/>
            <person name="Soldo B."/>
            <person name="Sorokin A."/>
            <person name="Tacconi E."/>
            <person name="Takagi T."/>
            <person name="Takahashi H."/>
            <person name="Takemaru K."/>
            <person name="Takeuchi M."/>
            <person name="Tamakoshi A."/>
            <person name="Tanaka T."/>
            <person name="Terpstra P."/>
            <person name="Tognoni A."/>
            <person name="Tosato V."/>
            <person name="Uchiyama S."/>
            <person name="Vandenbol M."/>
            <person name="Vannier F."/>
            <person name="Vassarotti A."/>
            <person name="Viari A."/>
            <person name="Wambutt R."/>
            <person name="Wedler E."/>
            <person name="Wedler H."/>
            <person name="Weitzenegger T."/>
            <person name="Winters P."/>
            <person name="Wipat A."/>
            <person name="Yamamoto H."/>
            <person name="Yamane K."/>
            <person name="Yasumoto K."/>
            <person name="Yata K."/>
            <person name="Yoshida K."/>
            <person name="Yoshikawa H.-F."/>
            <person name="Zumstein E."/>
            <person name="Yoshikawa H."/>
            <person name="Danchin A."/>
        </authorList>
    </citation>
    <scope>NUCLEOTIDE SEQUENCE [LARGE SCALE GENOMIC DNA]</scope>
    <source>
        <strain>168</strain>
    </source>
</reference>
<evidence type="ECO:0000255" key="1"/>
<evidence type="ECO:0000305" key="2"/>
<feature type="chain" id="PRO_0000049461" description="Uncharacterized protein YbeF">
    <location>
        <begin position="1"/>
        <end position="82"/>
    </location>
</feature>
<feature type="transmembrane region" description="Helical" evidence="1">
    <location>
        <begin position="4"/>
        <end position="26"/>
    </location>
</feature>
<feature type="transmembrane region" description="Helical" evidence="1">
    <location>
        <begin position="31"/>
        <end position="48"/>
    </location>
</feature>
<feature type="transmembrane region" description="Helical" evidence="1">
    <location>
        <begin position="52"/>
        <end position="74"/>
    </location>
</feature>
<dbReference type="EMBL" id="AB006424">
    <property type="protein sequence ID" value="BAA33112.1"/>
    <property type="molecule type" value="Genomic_DNA"/>
</dbReference>
<dbReference type="EMBL" id="AL009126">
    <property type="protein sequence ID" value="CAB12009.1"/>
    <property type="molecule type" value="Genomic_DNA"/>
</dbReference>
<dbReference type="PIR" id="E69748">
    <property type="entry name" value="E69748"/>
</dbReference>
<dbReference type="RefSeq" id="NP_388097.1">
    <property type="nucleotide sequence ID" value="NC_000964.3"/>
</dbReference>
<dbReference type="RefSeq" id="WP_003234879.1">
    <property type="nucleotide sequence ID" value="NZ_OZ025638.1"/>
</dbReference>
<dbReference type="FunCoup" id="O31442">
    <property type="interactions" value="59"/>
</dbReference>
<dbReference type="STRING" id="224308.BSU02150"/>
<dbReference type="PaxDb" id="224308-BSU02150"/>
<dbReference type="EnsemblBacteria" id="CAB12009">
    <property type="protein sequence ID" value="CAB12009"/>
    <property type="gene ID" value="BSU_02150"/>
</dbReference>
<dbReference type="GeneID" id="938444"/>
<dbReference type="KEGG" id="bsu:BSU02150"/>
<dbReference type="PATRIC" id="fig|224308.179.peg.221"/>
<dbReference type="eggNOG" id="ENOG5032900">
    <property type="taxonomic scope" value="Bacteria"/>
</dbReference>
<dbReference type="InParanoid" id="O31442"/>
<dbReference type="OrthoDB" id="2933944at2"/>
<dbReference type="BioCyc" id="BSUB:BSU02150-MONOMER"/>
<dbReference type="Proteomes" id="UP000001570">
    <property type="component" value="Chromosome"/>
</dbReference>
<dbReference type="GO" id="GO:0005886">
    <property type="term" value="C:plasma membrane"/>
    <property type="evidence" value="ECO:0007669"/>
    <property type="project" value="UniProtKB-SubCell"/>
</dbReference>
<dbReference type="InterPro" id="IPR020258">
    <property type="entry name" value="Uncharacterised_YbeF"/>
</dbReference>
<dbReference type="Pfam" id="PF10852">
    <property type="entry name" value="DUF2651"/>
    <property type="match status" value="1"/>
</dbReference>
<proteinExistence type="predicted"/>
<name>YBEF_BACSU</name>